<evidence type="ECO:0000255" key="1">
    <source>
        <dbReference type="HAMAP-Rule" id="MF_00102"/>
    </source>
</evidence>
<evidence type="ECO:0000305" key="2"/>
<protein>
    <recommendedName>
        <fullName evidence="1">4-hydroxy-tetrahydrodipicolinate reductase</fullName>
        <shortName evidence="1">HTPA reductase</shortName>
        <ecNumber evidence="1">1.17.1.8</ecNumber>
    </recommendedName>
</protein>
<sequence>MIKVAVTGAAGRMGSGIIRKITQQDDMEVVAAIEIPNSPLAGVDAGIQAGAGELGVKIVGAEKLEETLKESKADVLVDFTIAHAAVETVKKATACGVNVVVGTTGFTDEQMAENIKNVKDNDVKAVISSNMSIGVNVFFNTLKKLTPILNDFDIEIIEAHHNQKKDAPSGTAMTAFEVIANELDRDPEEVGVYGRQGMVGKRTKEEIGLHAIRGGDIVGDHTVMFIGDGERIEFTHRAHTREVFIAGVIRAIRYIPDAESGIVSSMNDVLGLE</sequence>
<proteinExistence type="inferred from homology"/>
<accession>A5ULF7</accession>
<gene>
    <name evidence="1" type="primary">dapB</name>
    <name type="ordered locus">Msm_0830</name>
</gene>
<organism>
    <name type="scientific">Methanobrevibacter smithii (strain ATCC 35061 / DSM 861 / OCM 144 / PS)</name>
    <dbReference type="NCBI Taxonomy" id="420247"/>
    <lineage>
        <taxon>Archaea</taxon>
        <taxon>Methanobacteriati</taxon>
        <taxon>Methanobacteriota</taxon>
        <taxon>Methanomada group</taxon>
        <taxon>Methanobacteria</taxon>
        <taxon>Methanobacteriales</taxon>
        <taxon>Methanobacteriaceae</taxon>
        <taxon>Methanobrevibacter</taxon>
    </lineage>
</organism>
<dbReference type="EC" id="1.17.1.8" evidence="1"/>
<dbReference type="EMBL" id="CP000678">
    <property type="protein sequence ID" value="ABQ87035.1"/>
    <property type="molecule type" value="Genomic_DNA"/>
</dbReference>
<dbReference type="RefSeq" id="WP_004033098.1">
    <property type="nucleotide sequence ID" value="NZ_CP117965.1"/>
</dbReference>
<dbReference type="SMR" id="A5ULF7"/>
<dbReference type="STRING" id="420247.Msm_0830"/>
<dbReference type="EnsemblBacteria" id="ABQ87035">
    <property type="protein sequence ID" value="ABQ87035"/>
    <property type="gene ID" value="Msm_0830"/>
</dbReference>
<dbReference type="GeneID" id="78817461"/>
<dbReference type="KEGG" id="msi:Msm_0830"/>
<dbReference type="PATRIC" id="fig|420247.28.peg.827"/>
<dbReference type="eggNOG" id="arCOG04393">
    <property type="taxonomic scope" value="Archaea"/>
</dbReference>
<dbReference type="HOGENOM" id="CLU_047479_2_1_2"/>
<dbReference type="UniPathway" id="UPA00034">
    <property type="reaction ID" value="UER00018"/>
</dbReference>
<dbReference type="Proteomes" id="UP000001992">
    <property type="component" value="Chromosome"/>
</dbReference>
<dbReference type="GO" id="GO:0005737">
    <property type="term" value="C:cytoplasm"/>
    <property type="evidence" value="ECO:0007669"/>
    <property type="project" value="UniProtKB-SubCell"/>
</dbReference>
<dbReference type="GO" id="GO:0008839">
    <property type="term" value="F:4-hydroxy-tetrahydrodipicolinate reductase"/>
    <property type="evidence" value="ECO:0007669"/>
    <property type="project" value="UniProtKB-EC"/>
</dbReference>
<dbReference type="GO" id="GO:0051287">
    <property type="term" value="F:NAD binding"/>
    <property type="evidence" value="ECO:0007669"/>
    <property type="project" value="UniProtKB-UniRule"/>
</dbReference>
<dbReference type="GO" id="GO:0050661">
    <property type="term" value="F:NADP binding"/>
    <property type="evidence" value="ECO:0007669"/>
    <property type="project" value="UniProtKB-UniRule"/>
</dbReference>
<dbReference type="GO" id="GO:0016726">
    <property type="term" value="F:oxidoreductase activity, acting on CH or CH2 groups, NAD or NADP as acceptor"/>
    <property type="evidence" value="ECO:0007669"/>
    <property type="project" value="UniProtKB-UniRule"/>
</dbReference>
<dbReference type="GO" id="GO:0019877">
    <property type="term" value="P:diaminopimelate biosynthetic process"/>
    <property type="evidence" value="ECO:0007669"/>
    <property type="project" value="UniProtKB-UniRule"/>
</dbReference>
<dbReference type="GO" id="GO:0009089">
    <property type="term" value="P:lysine biosynthetic process via diaminopimelate"/>
    <property type="evidence" value="ECO:0007669"/>
    <property type="project" value="UniProtKB-UniRule"/>
</dbReference>
<dbReference type="CDD" id="cd02274">
    <property type="entry name" value="DHDPR_N"/>
    <property type="match status" value="1"/>
</dbReference>
<dbReference type="FunFam" id="3.30.360.10:FF:000004">
    <property type="entry name" value="4-hydroxy-tetrahydrodipicolinate reductase"/>
    <property type="match status" value="1"/>
</dbReference>
<dbReference type="Gene3D" id="3.30.360.10">
    <property type="entry name" value="Dihydrodipicolinate Reductase, domain 2"/>
    <property type="match status" value="1"/>
</dbReference>
<dbReference type="Gene3D" id="3.40.50.720">
    <property type="entry name" value="NAD(P)-binding Rossmann-like Domain"/>
    <property type="match status" value="1"/>
</dbReference>
<dbReference type="HAMAP" id="MF_00102">
    <property type="entry name" value="DapB"/>
    <property type="match status" value="1"/>
</dbReference>
<dbReference type="InterPro" id="IPR022663">
    <property type="entry name" value="DapB_C"/>
</dbReference>
<dbReference type="InterPro" id="IPR000846">
    <property type="entry name" value="DapB_N"/>
</dbReference>
<dbReference type="InterPro" id="IPR022664">
    <property type="entry name" value="DapB_N_CS"/>
</dbReference>
<dbReference type="InterPro" id="IPR023940">
    <property type="entry name" value="DHDPR_bac"/>
</dbReference>
<dbReference type="InterPro" id="IPR036291">
    <property type="entry name" value="NAD(P)-bd_dom_sf"/>
</dbReference>
<dbReference type="NCBIfam" id="TIGR00036">
    <property type="entry name" value="dapB"/>
    <property type="match status" value="1"/>
</dbReference>
<dbReference type="PANTHER" id="PTHR20836:SF0">
    <property type="entry name" value="4-HYDROXY-TETRAHYDRODIPICOLINATE REDUCTASE 1, CHLOROPLASTIC-RELATED"/>
    <property type="match status" value="1"/>
</dbReference>
<dbReference type="PANTHER" id="PTHR20836">
    <property type="entry name" value="DIHYDRODIPICOLINATE REDUCTASE"/>
    <property type="match status" value="1"/>
</dbReference>
<dbReference type="Pfam" id="PF05173">
    <property type="entry name" value="DapB_C"/>
    <property type="match status" value="1"/>
</dbReference>
<dbReference type="Pfam" id="PF01113">
    <property type="entry name" value="DapB_N"/>
    <property type="match status" value="1"/>
</dbReference>
<dbReference type="PIRSF" id="PIRSF000161">
    <property type="entry name" value="DHPR"/>
    <property type="match status" value="1"/>
</dbReference>
<dbReference type="SUPFAM" id="SSF55347">
    <property type="entry name" value="Glyceraldehyde-3-phosphate dehydrogenase-like, C-terminal domain"/>
    <property type="match status" value="1"/>
</dbReference>
<dbReference type="SUPFAM" id="SSF51735">
    <property type="entry name" value="NAD(P)-binding Rossmann-fold domains"/>
    <property type="match status" value="1"/>
</dbReference>
<dbReference type="PROSITE" id="PS01298">
    <property type="entry name" value="DAPB"/>
    <property type="match status" value="1"/>
</dbReference>
<comment type="function">
    <text evidence="1">Catalyzes the conversion of 4-hydroxy-tetrahydrodipicolinate (HTPA) to tetrahydrodipicolinate.</text>
</comment>
<comment type="catalytic activity">
    <reaction evidence="1">
        <text>(S)-2,3,4,5-tetrahydrodipicolinate + NAD(+) + H2O = (2S,4S)-4-hydroxy-2,3,4,5-tetrahydrodipicolinate + NADH + H(+)</text>
        <dbReference type="Rhea" id="RHEA:35323"/>
        <dbReference type="ChEBI" id="CHEBI:15377"/>
        <dbReference type="ChEBI" id="CHEBI:15378"/>
        <dbReference type="ChEBI" id="CHEBI:16845"/>
        <dbReference type="ChEBI" id="CHEBI:57540"/>
        <dbReference type="ChEBI" id="CHEBI:57945"/>
        <dbReference type="ChEBI" id="CHEBI:67139"/>
        <dbReference type="EC" id="1.17.1.8"/>
    </reaction>
</comment>
<comment type="catalytic activity">
    <reaction evidence="1">
        <text>(S)-2,3,4,5-tetrahydrodipicolinate + NADP(+) + H2O = (2S,4S)-4-hydroxy-2,3,4,5-tetrahydrodipicolinate + NADPH + H(+)</text>
        <dbReference type="Rhea" id="RHEA:35331"/>
        <dbReference type="ChEBI" id="CHEBI:15377"/>
        <dbReference type="ChEBI" id="CHEBI:15378"/>
        <dbReference type="ChEBI" id="CHEBI:16845"/>
        <dbReference type="ChEBI" id="CHEBI:57783"/>
        <dbReference type="ChEBI" id="CHEBI:58349"/>
        <dbReference type="ChEBI" id="CHEBI:67139"/>
        <dbReference type="EC" id="1.17.1.8"/>
    </reaction>
</comment>
<comment type="pathway">
    <text evidence="1">Amino-acid biosynthesis; L-lysine biosynthesis via DAP pathway; (S)-tetrahydrodipicolinate from L-aspartate: step 4/4.</text>
</comment>
<comment type="subcellular location">
    <subcellularLocation>
        <location evidence="1">Cytoplasm</location>
    </subcellularLocation>
</comment>
<comment type="similarity">
    <text evidence="1">Belongs to the DapB family.</text>
</comment>
<comment type="caution">
    <text evidence="2">Was originally thought to be a dihydrodipicolinate reductase (DHDPR), catalyzing the conversion of dihydrodipicolinate to tetrahydrodipicolinate. However, it was shown in E.coli that the substrate of the enzymatic reaction is not dihydrodipicolinate (DHDP) but in fact (2S,4S)-4-hydroxy-2,3,4,5-tetrahydrodipicolinic acid (HTPA), the product released by the DapA-catalyzed reaction.</text>
</comment>
<feature type="chain" id="PRO_1000008592" description="4-hydroxy-tetrahydrodipicolinate reductase">
    <location>
        <begin position="1"/>
        <end position="273"/>
    </location>
</feature>
<feature type="active site" description="Proton donor/acceptor" evidence="1">
    <location>
        <position position="160"/>
    </location>
</feature>
<feature type="active site" description="Proton donor" evidence="1">
    <location>
        <position position="164"/>
    </location>
</feature>
<feature type="binding site" evidence="1">
    <location>
        <begin position="8"/>
        <end position="13"/>
    </location>
    <ligand>
        <name>NAD(+)</name>
        <dbReference type="ChEBI" id="CHEBI:57540"/>
    </ligand>
</feature>
<feature type="binding site" evidence="1">
    <location>
        <position position="34"/>
    </location>
    <ligand>
        <name>NAD(+)</name>
        <dbReference type="ChEBI" id="CHEBI:57540"/>
    </ligand>
</feature>
<feature type="binding site" evidence="1">
    <location>
        <begin position="102"/>
        <end position="104"/>
    </location>
    <ligand>
        <name>NAD(+)</name>
        <dbReference type="ChEBI" id="CHEBI:57540"/>
    </ligand>
</feature>
<feature type="binding site" evidence="1">
    <location>
        <begin position="128"/>
        <end position="131"/>
    </location>
    <ligand>
        <name>NAD(+)</name>
        <dbReference type="ChEBI" id="CHEBI:57540"/>
    </ligand>
</feature>
<feature type="binding site" evidence="1">
    <location>
        <position position="161"/>
    </location>
    <ligand>
        <name>(S)-2,3,4,5-tetrahydrodipicolinate</name>
        <dbReference type="ChEBI" id="CHEBI:16845"/>
    </ligand>
</feature>
<feature type="binding site" evidence="1">
    <location>
        <begin position="170"/>
        <end position="171"/>
    </location>
    <ligand>
        <name>(S)-2,3,4,5-tetrahydrodipicolinate</name>
        <dbReference type="ChEBI" id="CHEBI:16845"/>
    </ligand>
</feature>
<reference key="1">
    <citation type="journal article" date="2007" name="Proc. Natl. Acad. Sci. U.S.A.">
        <title>Genomic and metabolic adaptations of Methanobrevibacter smithii to the human gut.</title>
        <authorList>
            <person name="Samuel B.S."/>
            <person name="Hansen E.E."/>
            <person name="Manchester J.K."/>
            <person name="Coutinho P.M."/>
            <person name="Henrissat B."/>
            <person name="Fulton R."/>
            <person name="Latreille P."/>
            <person name="Kim K."/>
            <person name="Wilson R.K."/>
            <person name="Gordon J.I."/>
        </authorList>
    </citation>
    <scope>NUCLEOTIDE SEQUENCE [LARGE SCALE GENOMIC DNA]</scope>
    <source>
        <strain>ATCC 35061 / DSM 861 / OCM 144 / PS</strain>
    </source>
</reference>
<name>DAPB_METS3</name>
<keyword id="KW-0028">Amino-acid biosynthesis</keyword>
<keyword id="KW-0963">Cytoplasm</keyword>
<keyword id="KW-0220">Diaminopimelate biosynthesis</keyword>
<keyword id="KW-0457">Lysine biosynthesis</keyword>
<keyword id="KW-0520">NAD</keyword>
<keyword id="KW-0521">NADP</keyword>
<keyword id="KW-0560">Oxidoreductase</keyword>